<reference key="1">
    <citation type="submission" date="2007-07" db="EMBL/GenBank/DDBJ databases">
        <title>Complete genome sequence of Campylobacter jejuni subsp doylei 269.97 isolated from human blood.</title>
        <authorList>
            <person name="Fouts D.E."/>
            <person name="Mongodin E.F."/>
            <person name="Puiu D."/>
            <person name="Sebastian Y."/>
            <person name="Miller W.G."/>
            <person name="Mandrell R.E."/>
            <person name="Lastovica A.J."/>
            <person name="Nelson K.E."/>
        </authorList>
    </citation>
    <scope>NUCLEOTIDE SEQUENCE [LARGE SCALE GENOMIC DNA]</scope>
    <source>
        <strain>ATCC BAA-1458 / RM4099 / 269.97</strain>
    </source>
</reference>
<evidence type="ECO:0000255" key="1">
    <source>
        <dbReference type="HAMAP-Rule" id="MF_00168"/>
    </source>
</evidence>
<gene>
    <name evidence="1" type="primary">tgt</name>
    <name type="ordered locus">JJD26997_0779</name>
</gene>
<name>TGT_CAMJD</name>
<accession>A7H331</accession>
<sequence length="373" mass="42437">MEFKLKHKDGMARVCEITTAHSTFLTPVFMPVGTVGAVKSLDANDMKNELDAKIILANTYHMYLRPTSKVVKDFGGLHGFTKFDRSFLTDSGGFQAFSLSKNSKHFNEGIEFKSHIDGSRHLFTPKSVLDTQYDFHSDIMMILDDLVALPATKERVKISVDRTILWAKEAITYHKSMQNKGIGIGQNIFGIIQGGTDYEERKRCALSLNEMPFDGLAIGGLSVGEENALMYETVQNLNPYLDENRPRYLMGVGTPEDLVENVERGVDMFDCVMPTRNARNGTFFTSFGKFNIKKAEFINDHEAIGPACSCYTCRNFSRGYLNHLFKAKELTFFRLASLHNLHYYLELAREMREAILNNSFTQFKKNFYHLRGK</sequence>
<protein>
    <recommendedName>
        <fullName evidence="1">Queuine tRNA-ribosyltransferase</fullName>
        <ecNumber evidence="1">2.4.2.29</ecNumber>
    </recommendedName>
    <alternativeName>
        <fullName evidence="1">Guanine insertion enzyme</fullName>
    </alternativeName>
    <alternativeName>
        <fullName evidence="1">tRNA-guanine transglycosylase</fullName>
    </alternativeName>
</protein>
<organism>
    <name type="scientific">Campylobacter jejuni subsp. doylei (strain ATCC BAA-1458 / RM4099 / 269.97)</name>
    <dbReference type="NCBI Taxonomy" id="360109"/>
    <lineage>
        <taxon>Bacteria</taxon>
        <taxon>Pseudomonadati</taxon>
        <taxon>Campylobacterota</taxon>
        <taxon>Epsilonproteobacteria</taxon>
        <taxon>Campylobacterales</taxon>
        <taxon>Campylobacteraceae</taxon>
        <taxon>Campylobacter</taxon>
    </lineage>
</organism>
<dbReference type="EC" id="2.4.2.29" evidence="1"/>
<dbReference type="EMBL" id="CP000768">
    <property type="protein sequence ID" value="ABS43958.1"/>
    <property type="molecule type" value="Genomic_DNA"/>
</dbReference>
<dbReference type="SMR" id="A7H331"/>
<dbReference type="KEGG" id="cjd:JJD26997_0779"/>
<dbReference type="HOGENOM" id="CLU_022060_0_1_7"/>
<dbReference type="UniPathway" id="UPA00392"/>
<dbReference type="Proteomes" id="UP000002302">
    <property type="component" value="Chromosome"/>
</dbReference>
<dbReference type="GO" id="GO:0005829">
    <property type="term" value="C:cytosol"/>
    <property type="evidence" value="ECO:0007669"/>
    <property type="project" value="TreeGrafter"/>
</dbReference>
<dbReference type="GO" id="GO:0046872">
    <property type="term" value="F:metal ion binding"/>
    <property type="evidence" value="ECO:0007669"/>
    <property type="project" value="UniProtKB-KW"/>
</dbReference>
<dbReference type="GO" id="GO:0008479">
    <property type="term" value="F:tRNA-guanosine(34) queuine transglycosylase activity"/>
    <property type="evidence" value="ECO:0007669"/>
    <property type="project" value="UniProtKB-UniRule"/>
</dbReference>
<dbReference type="GO" id="GO:0008616">
    <property type="term" value="P:queuosine biosynthetic process"/>
    <property type="evidence" value="ECO:0007669"/>
    <property type="project" value="UniProtKB-UniRule"/>
</dbReference>
<dbReference type="GO" id="GO:0002099">
    <property type="term" value="P:tRNA wobble guanine modification"/>
    <property type="evidence" value="ECO:0007669"/>
    <property type="project" value="TreeGrafter"/>
</dbReference>
<dbReference type="GO" id="GO:0101030">
    <property type="term" value="P:tRNA-guanine transglycosylation"/>
    <property type="evidence" value="ECO:0007669"/>
    <property type="project" value="InterPro"/>
</dbReference>
<dbReference type="Gene3D" id="3.20.20.105">
    <property type="entry name" value="Queuine tRNA-ribosyltransferase-like"/>
    <property type="match status" value="1"/>
</dbReference>
<dbReference type="HAMAP" id="MF_00168">
    <property type="entry name" value="Q_tRNA_Tgt"/>
    <property type="match status" value="1"/>
</dbReference>
<dbReference type="InterPro" id="IPR050076">
    <property type="entry name" value="ArchSynthase1/Queuine_TRR"/>
</dbReference>
<dbReference type="InterPro" id="IPR004803">
    <property type="entry name" value="TGT"/>
</dbReference>
<dbReference type="InterPro" id="IPR036511">
    <property type="entry name" value="TGT-like_sf"/>
</dbReference>
<dbReference type="InterPro" id="IPR002616">
    <property type="entry name" value="tRNA_ribo_trans-like"/>
</dbReference>
<dbReference type="NCBIfam" id="TIGR00430">
    <property type="entry name" value="Q_tRNA_tgt"/>
    <property type="match status" value="1"/>
</dbReference>
<dbReference type="NCBIfam" id="TIGR00449">
    <property type="entry name" value="tgt_general"/>
    <property type="match status" value="1"/>
</dbReference>
<dbReference type="PANTHER" id="PTHR46499">
    <property type="entry name" value="QUEUINE TRNA-RIBOSYLTRANSFERASE"/>
    <property type="match status" value="1"/>
</dbReference>
<dbReference type="PANTHER" id="PTHR46499:SF1">
    <property type="entry name" value="QUEUINE TRNA-RIBOSYLTRANSFERASE"/>
    <property type="match status" value="1"/>
</dbReference>
<dbReference type="Pfam" id="PF01702">
    <property type="entry name" value="TGT"/>
    <property type="match status" value="1"/>
</dbReference>
<dbReference type="SUPFAM" id="SSF51713">
    <property type="entry name" value="tRNA-guanine transglycosylase"/>
    <property type="match status" value="1"/>
</dbReference>
<feature type="chain" id="PRO_1000016771" description="Queuine tRNA-ribosyltransferase">
    <location>
        <begin position="1"/>
        <end position="373"/>
    </location>
</feature>
<feature type="region of interest" description="RNA binding" evidence="1">
    <location>
        <begin position="251"/>
        <end position="257"/>
    </location>
</feature>
<feature type="region of interest" description="RNA binding; important for wobble base 34 recognition" evidence="1">
    <location>
        <begin position="275"/>
        <end position="279"/>
    </location>
</feature>
<feature type="active site" description="Proton acceptor" evidence="1">
    <location>
        <position position="90"/>
    </location>
</feature>
<feature type="active site" description="Nucleophile" evidence="1">
    <location>
        <position position="270"/>
    </location>
</feature>
<feature type="binding site" evidence="1">
    <location>
        <begin position="90"/>
        <end position="94"/>
    </location>
    <ligand>
        <name>substrate</name>
    </ligand>
</feature>
<feature type="binding site" evidence="1">
    <location>
        <position position="144"/>
    </location>
    <ligand>
        <name>substrate</name>
    </ligand>
</feature>
<feature type="binding site" evidence="1">
    <location>
        <position position="193"/>
    </location>
    <ligand>
        <name>substrate</name>
    </ligand>
</feature>
<feature type="binding site" evidence="1">
    <location>
        <position position="220"/>
    </location>
    <ligand>
        <name>substrate</name>
    </ligand>
</feature>
<feature type="binding site" evidence="1">
    <location>
        <position position="308"/>
    </location>
    <ligand>
        <name>Zn(2+)</name>
        <dbReference type="ChEBI" id="CHEBI:29105"/>
    </ligand>
</feature>
<feature type="binding site" evidence="1">
    <location>
        <position position="310"/>
    </location>
    <ligand>
        <name>Zn(2+)</name>
        <dbReference type="ChEBI" id="CHEBI:29105"/>
    </ligand>
</feature>
<feature type="binding site" evidence="1">
    <location>
        <position position="313"/>
    </location>
    <ligand>
        <name>Zn(2+)</name>
        <dbReference type="ChEBI" id="CHEBI:29105"/>
    </ligand>
</feature>
<feature type="binding site" evidence="1">
    <location>
        <position position="339"/>
    </location>
    <ligand>
        <name>Zn(2+)</name>
        <dbReference type="ChEBI" id="CHEBI:29105"/>
    </ligand>
</feature>
<keyword id="KW-0328">Glycosyltransferase</keyword>
<keyword id="KW-0479">Metal-binding</keyword>
<keyword id="KW-0671">Queuosine biosynthesis</keyword>
<keyword id="KW-0808">Transferase</keyword>
<keyword id="KW-0819">tRNA processing</keyword>
<keyword id="KW-0862">Zinc</keyword>
<comment type="function">
    <text evidence="1">Catalyzes the base-exchange of a guanine (G) residue with the queuine precursor 7-aminomethyl-7-deazaguanine (PreQ1) at position 34 (anticodon wobble position) in tRNAs with GU(N) anticodons (tRNA-Asp, -Asn, -His and -Tyr). Catalysis occurs through a double-displacement mechanism. The nucleophile active site attacks the C1' of nucleotide 34 to detach the guanine base from the RNA, forming a covalent enzyme-RNA intermediate. The proton acceptor active site deprotonates the incoming PreQ1, allowing a nucleophilic attack on the C1' of the ribose to form the product. After dissociation, two additional enzymatic reactions on the tRNA convert PreQ1 to queuine (Q), resulting in the hypermodified nucleoside queuosine (7-(((4,5-cis-dihydroxy-2-cyclopenten-1-yl)amino)methyl)-7-deazaguanosine).</text>
</comment>
<comment type="catalytic activity">
    <reaction evidence="1">
        <text>7-aminomethyl-7-carbaguanine + guanosine(34) in tRNA = 7-aminomethyl-7-carbaguanosine(34) in tRNA + guanine</text>
        <dbReference type="Rhea" id="RHEA:24104"/>
        <dbReference type="Rhea" id="RHEA-COMP:10341"/>
        <dbReference type="Rhea" id="RHEA-COMP:10342"/>
        <dbReference type="ChEBI" id="CHEBI:16235"/>
        <dbReference type="ChEBI" id="CHEBI:58703"/>
        <dbReference type="ChEBI" id="CHEBI:74269"/>
        <dbReference type="ChEBI" id="CHEBI:82833"/>
        <dbReference type="EC" id="2.4.2.29"/>
    </reaction>
</comment>
<comment type="cofactor">
    <cofactor evidence="1">
        <name>Zn(2+)</name>
        <dbReference type="ChEBI" id="CHEBI:29105"/>
    </cofactor>
    <text evidence="1">Binds 1 zinc ion per subunit.</text>
</comment>
<comment type="pathway">
    <text evidence="1">tRNA modification; tRNA-queuosine biosynthesis.</text>
</comment>
<comment type="subunit">
    <text evidence="1">Homodimer. Within each dimer, one monomer is responsible for RNA recognition and catalysis, while the other monomer binds to the replacement base PreQ1.</text>
</comment>
<comment type="similarity">
    <text evidence="1">Belongs to the queuine tRNA-ribosyltransferase family.</text>
</comment>
<proteinExistence type="inferred from homology"/>